<name>RBSD_RHOBA</name>
<keyword id="KW-0119">Carbohydrate metabolism</keyword>
<keyword id="KW-0963">Cytoplasm</keyword>
<keyword id="KW-0413">Isomerase</keyword>
<keyword id="KW-1185">Reference proteome</keyword>
<evidence type="ECO:0000255" key="1">
    <source>
        <dbReference type="HAMAP-Rule" id="MF_01661"/>
    </source>
</evidence>
<organism>
    <name type="scientific">Rhodopirellula baltica (strain DSM 10527 / NCIMB 13988 / SH1)</name>
    <dbReference type="NCBI Taxonomy" id="243090"/>
    <lineage>
        <taxon>Bacteria</taxon>
        <taxon>Pseudomonadati</taxon>
        <taxon>Planctomycetota</taxon>
        <taxon>Planctomycetia</taxon>
        <taxon>Pirellulales</taxon>
        <taxon>Pirellulaceae</taxon>
        <taxon>Rhodopirellula</taxon>
    </lineage>
</organism>
<protein>
    <recommendedName>
        <fullName evidence="1">D-ribose pyranase</fullName>
        <ecNumber evidence="1">5.4.99.62</ecNumber>
    </recommendedName>
</protein>
<proteinExistence type="inferred from homology"/>
<reference key="1">
    <citation type="journal article" date="2003" name="Proc. Natl. Acad. Sci. U.S.A.">
        <title>Complete genome sequence of the marine planctomycete Pirellula sp. strain 1.</title>
        <authorList>
            <person name="Gloeckner F.O."/>
            <person name="Kube M."/>
            <person name="Bauer M."/>
            <person name="Teeling H."/>
            <person name="Lombardot T."/>
            <person name="Ludwig W."/>
            <person name="Gade D."/>
            <person name="Beck A."/>
            <person name="Borzym K."/>
            <person name="Heitmann K."/>
            <person name="Rabus R."/>
            <person name="Schlesner H."/>
            <person name="Amann R."/>
            <person name="Reinhardt R."/>
        </authorList>
    </citation>
    <scope>NUCLEOTIDE SEQUENCE [LARGE SCALE GENOMIC DNA]</scope>
    <source>
        <strain>DSM 10527 / NCIMB 13988 / SH1</strain>
    </source>
</reference>
<feature type="chain" id="PRO_0000346245" description="D-ribose pyranase">
    <location>
        <begin position="1"/>
        <end position="135"/>
    </location>
</feature>
<feature type="active site" description="Proton donor" evidence="1">
    <location>
        <position position="20"/>
    </location>
</feature>
<feature type="binding site" evidence="1">
    <location>
        <position position="28"/>
    </location>
    <ligand>
        <name>substrate</name>
    </ligand>
</feature>
<feature type="binding site" evidence="1">
    <location>
        <position position="102"/>
    </location>
    <ligand>
        <name>substrate</name>
    </ligand>
</feature>
<feature type="binding site" evidence="1">
    <location>
        <begin position="124"/>
        <end position="126"/>
    </location>
    <ligand>
        <name>substrate</name>
    </ligand>
</feature>
<dbReference type="EC" id="5.4.99.62" evidence="1"/>
<dbReference type="EMBL" id="BX294138">
    <property type="protein sequence ID" value="CAD73224.1"/>
    <property type="molecule type" value="Genomic_DNA"/>
</dbReference>
<dbReference type="RefSeq" id="NP_865540.1">
    <property type="nucleotide sequence ID" value="NC_005027.1"/>
</dbReference>
<dbReference type="RefSeq" id="WP_007330720.1">
    <property type="nucleotide sequence ID" value="NC_005027.1"/>
</dbReference>
<dbReference type="SMR" id="Q7UU60"/>
<dbReference type="FunCoup" id="Q7UU60">
    <property type="interactions" value="50"/>
</dbReference>
<dbReference type="STRING" id="243090.RB3491"/>
<dbReference type="EnsemblBacteria" id="CAD73224">
    <property type="protein sequence ID" value="CAD73224"/>
    <property type="gene ID" value="RB3491"/>
</dbReference>
<dbReference type="KEGG" id="rba:RB3491"/>
<dbReference type="PATRIC" id="fig|243090.15.peg.1616"/>
<dbReference type="eggNOG" id="COG1869">
    <property type="taxonomic scope" value="Bacteria"/>
</dbReference>
<dbReference type="HOGENOM" id="CLU_135498_0_0_0"/>
<dbReference type="InParanoid" id="Q7UU60"/>
<dbReference type="OrthoDB" id="9805009at2"/>
<dbReference type="UniPathway" id="UPA00916">
    <property type="reaction ID" value="UER00888"/>
</dbReference>
<dbReference type="Proteomes" id="UP000001025">
    <property type="component" value="Chromosome"/>
</dbReference>
<dbReference type="GO" id="GO:0005737">
    <property type="term" value="C:cytoplasm"/>
    <property type="evidence" value="ECO:0007669"/>
    <property type="project" value="UniProtKB-SubCell"/>
</dbReference>
<dbReference type="GO" id="GO:0062193">
    <property type="term" value="F:D-ribose pyranase activity"/>
    <property type="evidence" value="ECO:0007669"/>
    <property type="project" value="UniProtKB-EC"/>
</dbReference>
<dbReference type="GO" id="GO:0042806">
    <property type="term" value="F:fucose binding"/>
    <property type="evidence" value="ECO:0000318"/>
    <property type="project" value="GO_Central"/>
</dbReference>
<dbReference type="GO" id="GO:0016872">
    <property type="term" value="F:intramolecular lyase activity"/>
    <property type="evidence" value="ECO:0007669"/>
    <property type="project" value="UniProtKB-UniRule"/>
</dbReference>
<dbReference type="GO" id="GO:0016857">
    <property type="term" value="F:racemase and epimerase activity, acting on carbohydrates and derivatives"/>
    <property type="evidence" value="ECO:0000318"/>
    <property type="project" value="GO_Central"/>
</dbReference>
<dbReference type="GO" id="GO:0019303">
    <property type="term" value="P:D-ribose catabolic process"/>
    <property type="evidence" value="ECO:0007669"/>
    <property type="project" value="UniProtKB-UniRule"/>
</dbReference>
<dbReference type="GO" id="GO:0006004">
    <property type="term" value="P:fucose metabolic process"/>
    <property type="evidence" value="ECO:0000318"/>
    <property type="project" value="GO_Central"/>
</dbReference>
<dbReference type="GO" id="GO:0036065">
    <property type="term" value="P:fucosylation"/>
    <property type="evidence" value="ECO:0000318"/>
    <property type="project" value="GO_Central"/>
</dbReference>
<dbReference type="Gene3D" id="3.40.1650.10">
    <property type="entry name" value="RbsD-like domain"/>
    <property type="match status" value="1"/>
</dbReference>
<dbReference type="HAMAP" id="MF_01661">
    <property type="entry name" value="D_rib_pyranase"/>
    <property type="match status" value="1"/>
</dbReference>
<dbReference type="InterPro" id="IPR023064">
    <property type="entry name" value="D-ribose_pyranase"/>
</dbReference>
<dbReference type="InterPro" id="IPR023750">
    <property type="entry name" value="RbsD-like_sf"/>
</dbReference>
<dbReference type="InterPro" id="IPR007721">
    <property type="entry name" value="RbsD_FucU"/>
</dbReference>
<dbReference type="NCBIfam" id="NF008761">
    <property type="entry name" value="PRK11797.1"/>
    <property type="match status" value="1"/>
</dbReference>
<dbReference type="PANTHER" id="PTHR37831">
    <property type="entry name" value="D-RIBOSE PYRANASE"/>
    <property type="match status" value="1"/>
</dbReference>
<dbReference type="PANTHER" id="PTHR37831:SF1">
    <property type="entry name" value="D-RIBOSE PYRANASE"/>
    <property type="match status" value="1"/>
</dbReference>
<dbReference type="Pfam" id="PF05025">
    <property type="entry name" value="RbsD_FucU"/>
    <property type="match status" value="1"/>
</dbReference>
<dbReference type="SUPFAM" id="SSF102546">
    <property type="entry name" value="RbsD-like"/>
    <property type="match status" value="1"/>
</dbReference>
<accession>Q7UU60</accession>
<gene>
    <name evidence="1" type="primary">rbsD</name>
    <name type="ordered locus">RB3491</name>
</gene>
<sequence>MKRTRLLNSELSYEISRIGHTASITLCDAGLPIPSGVKRIDLAIEEGYPTFLRTLDAILSELKVEEIVIASEIHDHNQMLFEQMMKLFEAHRMAPKITEVSHVEFKQRTQASEAIVRTGECTPYANVILKSGVVF</sequence>
<comment type="function">
    <text evidence="1">Catalyzes the interconversion of beta-pyran and beta-furan forms of D-ribose.</text>
</comment>
<comment type="catalytic activity">
    <reaction evidence="1">
        <text>beta-D-ribopyranose = beta-D-ribofuranose</text>
        <dbReference type="Rhea" id="RHEA:25432"/>
        <dbReference type="ChEBI" id="CHEBI:27476"/>
        <dbReference type="ChEBI" id="CHEBI:47002"/>
        <dbReference type="EC" id="5.4.99.62"/>
    </reaction>
</comment>
<comment type="pathway">
    <text evidence="1">Carbohydrate metabolism; D-ribose degradation; D-ribose 5-phosphate from beta-D-ribopyranose: step 1/2.</text>
</comment>
<comment type="subunit">
    <text evidence="1">Homodecamer.</text>
</comment>
<comment type="subcellular location">
    <subcellularLocation>
        <location evidence="1">Cytoplasm</location>
    </subcellularLocation>
</comment>
<comment type="similarity">
    <text evidence="1">Belongs to the RbsD / FucU family. RbsD subfamily.</text>
</comment>